<name>UVRC_CLOB8</name>
<reference key="1">
    <citation type="submission" date="2007-06" db="EMBL/GenBank/DDBJ databases">
        <title>Complete sequence of Clostridium beijerinckii NCIMB 8052.</title>
        <authorList>
            <consortium name="US DOE Joint Genome Institute"/>
            <person name="Copeland A."/>
            <person name="Lucas S."/>
            <person name="Lapidus A."/>
            <person name="Barry K."/>
            <person name="Detter J.C."/>
            <person name="Glavina del Rio T."/>
            <person name="Hammon N."/>
            <person name="Israni S."/>
            <person name="Dalin E."/>
            <person name="Tice H."/>
            <person name="Pitluck S."/>
            <person name="Sims D."/>
            <person name="Brettin T."/>
            <person name="Bruce D."/>
            <person name="Tapia R."/>
            <person name="Brainard J."/>
            <person name="Schmutz J."/>
            <person name="Larimer F."/>
            <person name="Land M."/>
            <person name="Hauser L."/>
            <person name="Kyrpides N."/>
            <person name="Mikhailova N."/>
            <person name="Bennet G."/>
            <person name="Cann I."/>
            <person name="Chen J.-S."/>
            <person name="Contreras A.L."/>
            <person name="Jones D."/>
            <person name="Kashket E."/>
            <person name="Mitchell W."/>
            <person name="Stoddard S."/>
            <person name="Schwarz W."/>
            <person name="Qureshi N."/>
            <person name="Young M."/>
            <person name="Shi Z."/>
            <person name="Ezeji T."/>
            <person name="White B."/>
            <person name="Blaschek H."/>
            <person name="Richardson P."/>
        </authorList>
    </citation>
    <scope>NUCLEOTIDE SEQUENCE [LARGE SCALE GENOMIC DNA]</scope>
    <source>
        <strain>ATCC 51743 / NCIMB 8052</strain>
    </source>
</reference>
<sequence length="621" mass="71960">MFDFKAQLKILPNEPGVYLMKNSLGEIIYVGKAKILKNRVRQYFQNSKNHSEKVKAMVKNVAEFEYIVTDSEMEALILECNLIKKYSPKYNISLKDDKFYPFIKVTTNEDFPRVFITRNYAKDGNKYFGPYPNAGDVHETINLIRKIFPLRTCKKSIIEGEKPTRACLNYHIKKCNAPCEGRISKTEYKKMIDEIMEVLSGKDRSLLNKLKEEMQSASGNLEFEKAASLRDKMIAIENIAEKQKVFKSQENDEDFINIYKDEKDCCIQVFFLRDGKITGREHFMIENSSHEEDTTIISQFIISFYGGTPKVPKNIYIPESDEIEALEEFLSIKRGSRVFVKVPIKGEKKEMLELVKNNAKVTLDQFKDKILRDKEINMISLKEIQELLELDSIPLRIEAYDISNIQGVDSVGSMIVFENGKAKNSDYRRFRIKTVKSANDYDSMREILDRRFTHGLKEIEEIQNKEIKFSSGKFSNFPDLIMMDGGKGQVNIALEVLEKLGIDIPVCGLVKDDYHATRGIIYNNNELIINRNSNLMQMIRRIQDEVHRFAITYHRSLRDKRTLHSILDDIPNIGQKRRMSLLMKFGSIDNIKKATLDELLETESIDTKAANSVLEYFRNTK</sequence>
<comment type="function">
    <text evidence="1">The UvrABC repair system catalyzes the recognition and processing of DNA lesions. UvrC both incises the 5' and 3' sides of the lesion. The N-terminal half is responsible for the 3' incision and the C-terminal half is responsible for the 5' incision.</text>
</comment>
<comment type="subunit">
    <text evidence="1">Interacts with UvrB in an incision complex.</text>
</comment>
<comment type="subcellular location">
    <subcellularLocation>
        <location evidence="1">Cytoplasm</location>
    </subcellularLocation>
</comment>
<comment type="similarity">
    <text evidence="1">Belongs to the UvrC family.</text>
</comment>
<keyword id="KW-0963">Cytoplasm</keyword>
<keyword id="KW-0227">DNA damage</keyword>
<keyword id="KW-0228">DNA excision</keyword>
<keyword id="KW-0234">DNA repair</keyword>
<keyword id="KW-0267">Excision nuclease</keyword>
<keyword id="KW-0742">SOS response</keyword>
<dbReference type="EMBL" id="CP000721">
    <property type="protein sequence ID" value="ABR36965.1"/>
    <property type="molecule type" value="Genomic_DNA"/>
</dbReference>
<dbReference type="RefSeq" id="WP_012061010.1">
    <property type="nucleotide sequence ID" value="NC_009617.1"/>
</dbReference>
<dbReference type="SMR" id="A6M2Y5"/>
<dbReference type="KEGG" id="cbe:Cbei_4859"/>
<dbReference type="eggNOG" id="COG0322">
    <property type="taxonomic scope" value="Bacteria"/>
</dbReference>
<dbReference type="HOGENOM" id="CLU_014841_3_2_9"/>
<dbReference type="Proteomes" id="UP000000565">
    <property type="component" value="Chromosome"/>
</dbReference>
<dbReference type="GO" id="GO:0005737">
    <property type="term" value="C:cytoplasm"/>
    <property type="evidence" value="ECO:0007669"/>
    <property type="project" value="UniProtKB-SubCell"/>
</dbReference>
<dbReference type="GO" id="GO:0009380">
    <property type="term" value="C:excinuclease repair complex"/>
    <property type="evidence" value="ECO:0007669"/>
    <property type="project" value="InterPro"/>
</dbReference>
<dbReference type="GO" id="GO:0003677">
    <property type="term" value="F:DNA binding"/>
    <property type="evidence" value="ECO:0007669"/>
    <property type="project" value="UniProtKB-UniRule"/>
</dbReference>
<dbReference type="GO" id="GO:0009381">
    <property type="term" value="F:excinuclease ABC activity"/>
    <property type="evidence" value="ECO:0007669"/>
    <property type="project" value="UniProtKB-UniRule"/>
</dbReference>
<dbReference type="GO" id="GO:0006289">
    <property type="term" value="P:nucleotide-excision repair"/>
    <property type="evidence" value="ECO:0007669"/>
    <property type="project" value="UniProtKB-UniRule"/>
</dbReference>
<dbReference type="GO" id="GO:0009432">
    <property type="term" value="P:SOS response"/>
    <property type="evidence" value="ECO:0007669"/>
    <property type="project" value="UniProtKB-UniRule"/>
</dbReference>
<dbReference type="CDD" id="cd10434">
    <property type="entry name" value="GIY-YIG_UvrC_Cho"/>
    <property type="match status" value="1"/>
</dbReference>
<dbReference type="FunFam" id="3.40.1440.10:FF:000001">
    <property type="entry name" value="UvrABC system protein C"/>
    <property type="match status" value="1"/>
</dbReference>
<dbReference type="Gene3D" id="1.10.150.20">
    <property type="entry name" value="5' to 3' exonuclease, C-terminal subdomain"/>
    <property type="match status" value="1"/>
</dbReference>
<dbReference type="Gene3D" id="3.40.1440.10">
    <property type="entry name" value="GIY-YIG endonuclease"/>
    <property type="match status" value="1"/>
</dbReference>
<dbReference type="Gene3D" id="4.10.860.10">
    <property type="entry name" value="UVR domain"/>
    <property type="match status" value="1"/>
</dbReference>
<dbReference type="Gene3D" id="3.30.420.340">
    <property type="entry name" value="UvrC, RNAse H endonuclease domain"/>
    <property type="match status" value="1"/>
</dbReference>
<dbReference type="HAMAP" id="MF_00203">
    <property type="entry name" value="UvrC"/>
    <property type="match status" value="1"/>
</dbReference>
<dbReference type="InterPro" id="IPR041663">
    <property type="entry name" value="DisA/LigA_HHH"/>
</dbReference>
<dbReference type="InterPro" id="IPR000305">
    <property type="entry name" value="GIY-YIG_endonuc"/>
</dbReference>
<dbReference type="InterPro" id="IPR035901">
    <property type="entry name" value="GIY-YIG_endonuc_sf"/>
</dbReference>
<dbReference type="InterPro" id="IPR047296">
    <property type="entry name" value="GIY-YIG_UvrC_Cho"/>
</dbReference>
<dbReference type="InterPro" id="IPR010994">
    <property type="entry name" value="RuvA_2-like"/>
</dbReference>
<dbReference type="InterPro" id="IPR001943">
    <property type="entry name" value="UVR_dom"/>
</dbReference>
<dbReference type="InterPro" id="IPR036876">
    <property type="entry name" value="UVR_dom_sf"/>
</dbReference>
<dbReference type="InterPro" id="IPR050066">
    <property type="entry name" value="UvrABC_protein_C"/>
</dbReference>
<dbReference type="InterPro" id="IPR004791">
    <property type="entry name" value="UvrC"/>
</dbReference>
<dbReference type="InterPro" id="IPR001162">
    <property type="entry name" value="UvrC_RNase_H_dom"/>
</dbReference>
<dbReference type="InterPro" id="IPR038476">
    <property type="entry name" value="UvrC_RNase_H_dom_sf"/>
</dbReference>
<dbReference type="NCBIfam" id="NF001824">
    <property type="entry name" value="PRK00558.1-5"/>
    <property type="match status" value="1"/>
</dbReference>
<dbReference type="NCBIfam" id="TIGR00194">
    <property type="entry name" value="uvrC"/>
    <property type="match status" value="1"/>
</dbReference>
<dbReference type="PANTHER" id="PTHR30562:SF1">
    <property type="entry name" value="UVRABC SYSTEM PROTEIN C"/>
    <property type="match status" value="1"/>
</dbReference>
<dbReference type="PANTHER" id="PTHR30562">
    <property type="entry name" value="UVRC/OXIDOREDUCTASE"/>
    <property type="match status" value="1"/>
</dbReference>
<dbReference type="Pfam" id="PF01541">
    <property type="entry name" value="GIY-YIG"/>
    <property type="match status" value="1"/>
</dbReference>
<dbReference type="Pfam" id="PF12826">
    <property type="entry name" value="HHH_2"/>
    <property type="match status" value="1"/>
</dbReference>
<dbReference type="Pfam" id="PF02151">
    <property type="entry name" value="UVR"/>
    <property type="match status" value="1"/>
</dbReference>
<dbReference type="Pfam" id="PF22920">
    <property type="entry name" value="UvrC_RNaseH"/>
    <property type="match status" value="1"/>
</dbReference>
<dbReference type="Pfam" id="PF08459">
    <property type="entry name" value="UvrC_RNaseH_dom"/>
    <property type="match status" value="1"/>
</dbReference>
<dbReference type="SMART" id="SM00465">
    <property type="entry name" value="GIYc"/>
    <property type="match status" value="1"/>
</dbReference>
<dbReference type="SUPFAM" id="SSF46600">
    <property type="entry name" value="C-terminal UvrC-binding domain of UvrB"/>
    <property type="match status" value="1"/>
</dbReference>
<dbReference type="SUPFAM" id="SSF82771">
    <property type="entry name" value="GIY-YIG endonuclease"/>
    <property type="match status" value="1"/>
</dbReference>
<dbReference type="SUPFAM" id="SSF47781">
    <property type="entry name" value="RuvA domain 2-like"/>
    <property type="match status" value="1"/>
</dbReference>
<dbReference type="PROSITE" id="PS50164">
    <property type="entry name" value="GIY_YIG"/>
    <property type="match status" value="1"/>
</dbReference>
<dbReference type="PROSITE" id="PS50151">
    <property type="entry name" value="UVR"/>
    <property type="match status" value="1"/>
</dbReference>
<dbReference type="PROSITE" id="PS50165">
    <property type="entry name" value="UVRC"/>
    <property type="match status" value="1"/>
</dbReference>
<accession>A6M2Y5</accession>
<feature type="chain" id="PRO_1000077770" description="UvrABC system protein C">
    <location>
        <begin position="1"/>
        <end position="621"/>
    </location>
</feature>
<feature type="domain" description="GIY-YIG" evidence="1">
    <location>
        <begin position="13"/>
        <end position="92"/>
    </location>
</feature>
<feature type="domain" description="UVR" evidence="1">
    <location>
        <begin position="204"/>
        <end position="239"/>
    </location>
</feature>
<organism>
    <name type="scientific">Clostridium beijerinckii (strain ATCC 51743 / NCIMB 8052)</name>
    <name type="common">Clostridium acetobutylicum</name>
    <dbReference type="NCBI Taxonomy" id="290402"/>
    <lineage>
        <taxon>Bacteria</taxon>
        <taxon>Bacillati</taxon>
        <taxon>Bacillota</taxon>
        <taxon>Clostridia</taxon>
        <taxon>Eubacteriales</taxon>
        <taxon>Clostridiaceae</taxon>
        <taxon>Clostridium</taxon>
    </lineage>
</organism>
<protein>
    <recommendedName>
        <fullName evidence="1">UvrABC system protein C</fullName>
        <shortName evidence="1">Protein UvrC</shortName>
    </recommendedName>
    <alternativeName>
        <fullName evidence="1">Excinuclease ABC subunit C</fullName>
    </alternativeName>
</protein>
<gene>
    <name evidence="1" type="primary">uvrC</name>
    <name type="ordered locus">Cbei_4859</name>
</gene>
<evidence type="ECO:0000255" key="1">
    <source>
        <dbReference type="HAMAP-Rule" id="MF_00203"/>
    </source>
</evidence>
<proteinExistence type="inferred from homology"/>